<dbReference type="EMBL" id="AC003680">
    <property type="protein sequence ID" value="AAC06168.1"/>
    <property type="molecule type" value="Genomic_DNA"/>
</dbReference>
<dbReference type="EMBL" id="CP002685">
    <property type="protein sequence ID" value="AEC10586.1"/>
    <property type="molecule type" value="Genomic_DNA"/>
</dbReference>
<dbReference type="EMBL" id="AF370606">
    <property type="protein sequence ID" value="AAK43925.1"/>
    <property type="molecule type" value="mRNA"/>
</dbReference>
<dbReference type="EMBL" id="AY056214">
    <property type="protein sequence ID" value="AAL07063.1"/>
    <property type="molecule type" value="mRNA"/>
</dbReference>
<dbReference type="EMBL" id="AY113981">
    <property type="protein sequence ID" value="AAM45029.1"/>
    <property type="molecule type" value="mRNA"/>
</dbReference>
<dbReference type="PIR" id="T00881">
    <property type="entry name" value="T00881"/>
</dbReference>
<dbReference type="RefSeq" id="NP_182092.1">
    <property type="nucleotide sequence ID" value="NM_130131.2"/>
</dbReference>
<dbReference type="SMR" id="O64647"/>
<dbReference type="BioGRID" id="4512">
    <property type="interactions" value="121"/>
</dbReference>
<dbReference type="FunCoup" id="O64647">
    <property type="interactions" value="1"/>
</dbReference>
<dbReference type="IntAct" id="O64647">
    <property type="interactions" value="132"/>
</dbReference>
<dbReference type="STRING" id="3702.O64647"/>
<dbReference type="PaxDb" id="3702-AT2G45680.1"/>
<dbReference type="ProteomicsDB" id="234198"/>
<dbReference type="EnsemblPlants" id="AT2G45680.1">
    <property type="protein sequence ID" value="AT2G45680.1"/>
    <property type="gene ID" value="AT2G45680"/>
</dbReference>
<dbReference type="GeneID" id="819176"/>
<dbReference type="Gramene" id="AT2G45680.1">
    <property type="protein sequence ID" value="AT2G45680.1"/>
    <property type="gene ID" value="AT2G45680"/>
</dbReference>
<dbReference type="KEGG" id="ath:AT2G45680"/>
<dbReference type="Araport" id="AT2G45680"/>
<dbReference type="TAIR" id="AT2G45680">
    <property type="gene designation" value="TCP9"/>
</dbReference>
<dbReference type="eggNOG" id="ENOG502QR5H">
    <property type="taxonomic scope" value="Eukaryota"/>
</dbReference>
<dbReference type="HOGENOM" id="CLU_058546_0_0_1"/>
<dbReference type="InParanoid" id="O64647"/>
<dbReference type="OMA" id="THMLRDF"/>
<dbReference type="PhylomeDB" id="O64647"/>
<dbReference type="PRO" id="PR:O64647"/>
<dbReference type="Proteomes" id="UP000006548">
    <property type="component" value="Chromosome 2"/>
</dbReference>
<dbReference type="ExpressionAtlas" id="O64647">
    <property type="expression patterns" value="baseline and differential"/>
</dbReference>
<dbReference type="GO" id="GO:0005634">
    <property type="term" value="C:nucleus"/>
    <property type="evidence" value="ECO:0000314"/>
    <property type="project" value="TAIR"/>
</dbReference>
<dbReference type="GO" id="GO:0003700">
    <property type="term" value="F:DNA-binding transcription factor activity"/>
    <property type="evidence" value="ECO:0000250"/>
    <property type="project" value="TAIR"/>
</dbReference>
<dbReference type="GO" id="GO:0000976">
    <property type="term" value="F:transcription cis-regulatory region binding"/>
    <property type="evidence" value="ECO:0000353"/>
    <property type="project" value="TAIR"/>
</dbReference>
<dbReference type="GO" id="GO:1900056">
    <property type="term" value="P:negative regulation of leaf senescence"/>
    <property type="evidence" value="ECO:0000316"/>
    <property type="project" value="TAIR"/>
</dbReference>
<dbReference type="GO" id="GO:0008361">
    <property type="term" value="P:regulation of cell size"/>
    <property type="evidence" value="ECO:0000316"/>
    <property type="project" value="TAIR"/>
</dbReference>
<dbReference type="GO" id="GO:0006355">
    <property type="term" value="P:regulation of DNA-templated transcription"/>
    <property type="evidence" value="ECO:0000304"/>
    <property type="project" value="TAIR"/>
</dbReference>
<dbReference type="GO" id="GO:0048364">
    <property type="term" value="P:root development"/>
    <property type="evidence" value="ECO:0000315"/>
    <property type="project" value="TAIR"/>
</dbReference>
<dbReference type="InterPro" id="IPR017887">
    <property type="entry name" value="TF_TCP_subgr"/>
</dbReference>
<dbReference type="InterPro" id="IPR005333">
    <property type="entry name" value="Transcription_factor_TCP"/>
</dbReference>
<dbReference type="PANTHER" id="PTHR31072">
    <property type="entry name" value="TRANSCRIPTION FACTOR TCP4-RELATED"/>
    <property type="match status" value="1"/>
</dbReference>
<dbReference type="PANTHER" id="PTHR31072:SF1">
    <property type="entry name" value="TRANSCRIPTION FACTOR TCP9"/>
    <property type="match status" value="1"/>
</dbReference>
<dbReference type="Pfam" id="PF03634">
    <property type="entry name" value="TCP"/>
    <property type="match status" value="1"/>
</dbReference>
<dbReference type="PROSITE" id="PS51369">
    <property type="entry name" value="TCP"/>
    <property type="match status" value="1"/>
</dbReference>
<gene>
    <name type="primary">TCP9</name>
    <name type="ordered locus">At2g45680</name>
    <name type="ORF">F17K2.21</name>
</gene>
<accession>O64647</accession>
<feature type="chain" id="PRO_0000330783" description="Transcription factor TCP9">
    <location>
        <begin position="1"/>
        <end position="356"/>
    </location>
</feature>
<feature type="domain" description="TCP" evidence="1">
    <location>
        <begin position="75"/>
        <end position="129"/>
    </location>
</feature>
<feature type="region of interest" description="Disordered" evidence="2">
    <location>
        <begin position="57"/>
        <end position="85"/>
    </location>
</feature>
<feature type="region of interest" description="Disordered" evidence="2">
    <location>
        <begin position="151"/>
        <end position="171"/>
    </location>
</feature>
<feature type="region of interest" description="Disordered" evidence="2">
    <location>
        <begin position="302"/>
        <end position="322"/>
    </location>
</feature>
<feature type="compositionally biased region" description="Basic and acidic residues" evidence="2">
    <location>
        <begin position="74"/>
        <end position="85"/>
    </location>
</feature>
<feature type="compositionally biased region" description="Low complexity" evidence="2">
    <location>
        <begin position="308"/>
        <end position="322"/>
    </location>
</feature>
<evidence type="ECO:0000255" key="1">
    <source>
        <dbReference type="PROSITE-ProRule" id="PRU00701"/>
    </source>
</evidence>
<evidence type="ECO:0000256" key="2">
    <source>
        <dbReference type="SAM" id="MobiDB-lite"/>
    </source>
</evidence>
<evidence type="ECO:0000269" key="3">
    <source>
    </source>
</evidence>
<evidence type="ECO:0000305" key="4"/>
<name>TCP9_ARATH</name>
<reference key="1">
    <citation type="journal article" date="1999" name="Nature">
        <title>Sequence and analysis of chromosome 2 of the plant Arabidopsis thaliana.</title>
        <authorList>
            <person name="Lin X."/>
            <person name="Kaul S."/>
            <person name="Rounsley S.D."/>
            <person name="Shea T.P."/>
            <person name="Benito M.-I."/>
            <person name="Town C.D."/>
            <person name="Fujii C.Y."/>
            <person name="Mason T.M."/>
            <person name="Bowman C.L."/>
            <person name="Barnstead M.E."/>
            <person name="Feldblyum T.V."/>
            <person name="Buell C.R."/>
            <person name="Ketchum K.A."/>
            <person name="Lee J.J."/>
            <person name="Ronning C.M."/>
            <person name="Koo H.L."/>
            <person name="Moffat K.S."/>
            <person name="Cronin L.A."/>
            <person name="Shen M."/>
            <person name="Pai G."/>
            <person name="Van Aken S."/>
            <person name="Umayam L."/>
            <person name="Tallon L.J."/>
            <person name="Gill J.E."/>
            <person name="Adams M.D."/>
            <person name="Carrera A.J."/>
            <person name="Creasy T.H."/>
            <person name="Goodman H.M."/>
            <person name="Somerville C.R."/>
            <person name="Copenhaver G.P."/>
            <person name="Preuss D."/>
            <person name="Nierman W.C."/>
            <person name="White O."/>
            <person name="Eisen J.A."/>
            <person name="Salzberg S.L."/>
            <person name="Fraser C.M."/>
            <person name="Venter J.C."/>
        </authorList>
    </citation>
    <scope>NUCLEOTIDE SEQUENCE [LARGE SCALE GENOMIC DNA]</scope>
    <source>
        <strain>cv. Columbia</strain>
    </source>
</reference>
<reference key="2">
    <citation type="journal article" date="2017" name="Plant J.">
        <title>Araport11: a complete reannotation of the Arabidopsis thaliana reference genome.</title>
        <authorList>
            <person name="Cheng C.Y."/>
            <person name="Krishnakumar V."/>
            <person name="Chan A.P."/>
            <person name="Thibaud-Nissen F."/>
            <person name="Schobel S."/>
            <person name="Town C.D."/>
        </authorList>
    </citation>
    <scope>GENOME REANNOTATION</scope>
    <source>
        <strain>cv. Columbia</strain>
    </source>
</reference>
<reference key="3">
    <citation type="journal article" date="2003" name="Science">
        <title>Empirical analysis of transcriptional activity in the Arabidopsis genome.</title>
        <authorList>
            <person name="Yamada K."/>
            <person name="Lim J."/>
            <person name="Dale J.M."/>
            <person name="Chen H."/>
            <person name="Shinn P."/>
            <person name="Palm C.J."/>
            <person name="Southwick A.M."/>
            <person name="Wu H.C."/>
            <person name="Kim C.J."/>
            <person name="Nguyen M."/>
            <person name="Pham P.K."/>
            <person name="Cheuk R.F."/>
            <person name="Karlin-Newmann G."/>
            <person name="Liu S.X."/>
            <person name="Lam B."/>
            <person name="Sakano H."/>
            <person name="Wu T."/>
            <person name="Yu G."/>
            <person name="Miranda M."/>
            <person name="Quach H.L."/>
            <person name="Tripp M."/>
            <person name="Chang C.H."/>
            <person name="Lee J.M."/>
            <person name="Toriumi M.J."/>
            <person name="Chan M.M."/>
            <person name="Tang C.C."/>
            <person name="Onodera C.S."/>
            <person name="Deng J.M."/>
            <person name="Akiyama K."/>
            <person name="Ansari Y."/>
            <person name="Arakawa T."/>
            <person name="Banh J."/>
            <person name="Banno F."/>
            <person name="Bowser L."/>
            <person name="Brooks S.Y."/>
            <person name="Carninci P."/>
            <person name="Chao Q."/>
            <person name="Choy N."/>
            <person name="Enju A."/>
            <person name="Goldsmith A.D."/>
            <person name="Gurjal M."/>
            <person name="Hansen N.F."/>
            <person name="Hayashizaki Y."/>
            <person name="Johnson-Hopson C."/>
            <person name="Hsuan V.W."/>
            <person name="Iida K."/>
            <person name="Karnes M."/>
            <person name="Khan S."/>
            <person name="Koesema E."/>
            <person name="Ishida J."/>
            <person name="Jiang P.X."/>
            <person name="Jones T."/>
            <person name="Kawai J."/>
            <person name="Kamiya A."/>
            <person name="Meyers C."/>
            <person name="Nakajima M."/>
            <person name="Narusaka M."/>
            <person name="Seki M."/>
            <person name="Sakurai T."/>
            <person name="Satou M."/>
            <person name="Tamse R."/>
            <person name="Vaysberg M."/>
            <person name="Wallender E.K."/>
            <person name="Wong C."/>
            <person name="Yamamura Y."/>
            <person name="Yuan S."/>
            <person name="Shinozaki K."/>
            <person name="Davis R.W."/>
            <person name="Theologis A."/>
            <person name="Ecker J.R."/>
        </authorList>
    </citation>
    <scope>NUCLEOTIDE SEQUENCE [LARGE SCALE MRNA]</scope>
    <source>
        <strain>cv. Columbia</strain>
    </source>
</reference>
<reference key="4">
    <citation type="journal article" date="2007" name="Plant Cell">
        <title>Arabidopsis BRANCHED1 acts as an integrator of branching signals within axillary buds.</title>
        <authorList>
            <person name="Aguilar-Martinez J.A."/>
            <person name="Poza-Carrion C."/>
            <person name="Cubas P."/>
        </authorList>
    </citation>
    <scope>GENE FAMILY</scope>
    <scope>NOMENCLATURE</scope>
</reference>
<reference key="5">
    <citation type="journal article" date="2014" name="J. Genet. Genomics">
        <title>SPOROCYTELESS is a novel embryophyte-specific transcription repressor that interacts with TPL and TCP proteins in Arabidopsis.</title>
        <authorList>
            <person name="Chen G.H."/>
            <person name="Sun J.Y."/>
            <person name="Liu M."/>
            <person name="Liu J."/>
            <person name="Yang W.C."/>
        </authorList>
    </citation>
    <scope>INTERACTION WITH SPL</scope>
    <scope>TISSUE SPECIFICITY</scope>
</reference>
<sequence length="356" mass="37631">MATIQKLEEVAGKDQTLRAVDLTIINGVRNVETSRPFQVNPTVSLEPKAEPVMPSFSMSLAPPSSTGPPLKRASTKDRHTKVEGRGRRIRMPATCAARIFQLTRELGHKSDGETIRWLLENAEPAIIAATGTGTVPAIAMSVNGTLKIPTTTNADSDMGENLMKKKRKRPSNSEYIDISDAVSASSGLAPIATTTTIQPPQALASSTVAQQLLPQGMYPMWAIPSNAMIPTVGAFFLIPQIAGPSNQPQLLAFPAAAASPSSYVAAVQQASTMARPPPLQVVPSSGFVSVSDVSGSNLSRATSVMAPSSSSGVTTGSSSSIATTTTHTLRDFSLEIYEKQELHQFMSTTTARSSNH</sequence>
<organism>
    <name type="scientific">Arabidopsis thaliana</name>
    <name type="common">Mouse-ear cress</name>
    <dbReference type="NCBI Taxonomy" id="3702"/>
    <lineage>
        <taxon>Eukaryota</taxon>
        <taxon>Viridiplantae</taxon>
        <taxon>Streptophyta</taxon>
        <taxon>Embryophyta</taxon>
        <taxon>Tracheophyta</taxon>
        <taxon>Spermatophyta</taxon>
        <taxon>Magnoliopsida</taxon>
        <taxon>eudicotyledons</taxon>
        <taxon>Gunneridae</taxon>
        <taxon>Pentapetalae</taxon>
        <taxon>rosids</taxon>
        <taxon>malvids</taxon>
        <taxon>Brassicales</taxon>
        <taxon>Brassicaceae</taxon>
        <taxon>Camelineae</taxon>
        <taxon>Arabidopsis</taxon>
    </lineage>
</organism>
<keyword id="KW-0238">DNA-binding</keyword>
<keyword id="KW-0539">Nucleus</keyword>
<keyword id="KW-1185">Reference proteome</keyword>
<keyword id="KW-0804">Transcription</keyword>
<keyword id="KW-0805">Transcription regulation</keyword>
<comment type="subunit">
    <text evidence="3">Interacts with SPL.</text>
</comment>
<comment type="interaction">
    <interactant intactId="EBI-9838721">
        <id>O64647</id>
    </interactant>
    <interactant intactId="EBI-15197415">
        <id>Q56XU4</id>
        <label>At1g19860</label>
    </interactant>
    <organismsDiffer>false</organismsDiffer>
    <experiments>3</experiments>
</comment>
<comment type="interaction">
    <interactant intactId="EBI-9838721">
        <id>O64647</id>
    </interactant>
    <interactant intactId="EBI-15191587">
        <id>F4K1A8</id>
        <label>At5g26749</label>
    </interactant>
    <organismsDiffer>false</organismsDiffer>
    <experiments>3</experiments>
</comment>
<comment type="interaction">
    <interactant intactId="EBI-9838721">
        <id>O64647</id>
    </interactant>
    <interactant intactId="EBI-4427748">
        <id>Q7XJU2</id>
        <label>BHLH153</label>
    </interactant>
    <organismsDiffer>false</organismsDiffer>
    <experiments>3</experiments>
</comment>
<comment type="interaction">
    <interactant intactId="EBI-9838721">
        <id>O64647</id>
    </interactant>
    <interactant intactId="EBI-4437532">
        <id>Q9SN74</id>
        <label>BHLH47</label>
    </interactant>
    <organismsDiffer>false</organismsDiffer>
    <experiments>3</experiments>
</comment>
<comment type="interaction">
    <interactant intactId="EBI-9838721">
        <id>O64647</id>
    </interactant>
    <interactant intactId="EBI-1536103">
        <id>Q93ZL5</id>
        <label>CDF2</label>
    </interactant>
    <organismsDiffer>false</organismsDiffer>
    <experiments>3</experiments>
</comment>
<comment type="interaction">
    <interactant intactId="EBI-9838721">
        <id>O64647</id>
    </interactant>
    <interactant intactId="EBI-4448729">
        <id>Q9ZVC9</id>
        <label>FRS3</label>
    </interactant>
    <organismsDiffer>false</organismsDiffer>
    <experiments>5</experiments>
</comment>
<comment type="interaction">
    <interactant intactId="EBI-9838721">
        <id>O64647</id>
    </interactant>
    <interactant intactId="EBI-1396623">
        <id>Q8L8A5</id>
        <label>GIF1</label>
    </interactant>
    <organismsDiffer>false</organismsDiffer>
    <experiments>3</experiments>
</comment>
<comment type="interaction">
    <interactant intactId="EBI-9838721">
        <id>O64647</id>
    </interactant>
    <interactant intactId="EBI-15194063">
        <id>Q9C9H1</id>
        <label>GIS3</label>
    </interactant>
    <organismsDiffer>false</organismsDiffer>
    <experiments>3</experiments>
</comment>
<comment type="interaction">
    <interactant intactId="EBI-9838721">
        <id>O64647</id>
    </interactant>
    <interactant intactId="EBI-1536734">
        <id>Q9LXD8</id>
        <label>HEC3</label>
    </interactant>
    <organismsDiffer>false</organismsDiffer>
    <experiments>3</experiments>
</comment>
<comment type="interaction">
    <interactant intactId="EBI-9838721">
        <id>O64647</id>
    </interactant>
    <interactant intactId="EBI-15192145">
        <id>O22230</id>
        <label>HSFB3</label>
    </interactant>
    <organismsDiffer>false</organismsDiffer>
    <experiments>3</experiments>
</comment>
<comment type="interaction">
    <interactant intactId="EBI-9838721">
        <id>O64647</id>
    </interactant>
    <interactant intactId="EBI-632243">
        <id>P93830</id>
        <label>IAA17</label>
    </interactant>
    <organismsDiffer>false</organismsDiffer>
    <experiments>3</experiments>
</comment>
<comment type="interaction">
    <interactant intactId="EBI-9838721">
        <id>O64647</id>
    </interactant>
    <interactant intactId="EBI-25519488">
        <id>Q9SZU7</id>
        <label>KAI2</label>
    </interactant>
    <organismsDiffer>false</organismsDiffer>
    <experiments>3</experiments>
</comment>
<comment type="interaction">
    <interactant intactId="EBI-9838721">
        <id>O64647</id>
    </interactant>
    <interactant intactId="EBI-15200088">
        <id>Q9LVS0</id>
        <label>KUA1</label>
    </interactant>
    <organismsDiffer>false</organismsDiffer>
    <experiments>3</experiments>
</comment>
<comment type="interaction">
    <interactant intactId="EBI-9838721">
        <id>O64647</id>
    </interactant>
    <interactant intactId="EBI-2358362">
        <id>Q39022</id>
        <label>MPK2</label>
    </interactant>
    <organismsDiffer>false</organismsDiffer>
    <experiments>3</experiments>
</comment>
<comment type="interaction">
    <interactant intactId="EBI-9838721">
        <id>O64647</id>
    </interactant>
    <interactant intactId="EBI-4461713">
        <id>Q8VY64</id>
        <label>NFYA4</label>
    </interactant>
    <organismsDiffer>false</organismsDiffer>
    <experiments>3</experiments>
</comment>
<comment type="interaction">
    <interactant intactId="EBI-9838721">
        <id>O64647</id>
    </interactant>
    <interactant intactId="EBI-25512318">
        <id>O23078</id>
        <label>PLDBETA2</label>
    </interactant>
    <organismsDiffer>false</organismsDiffer>
    <experiments>3</experiments>
</comment>
<comment type="interaction">
    <interactant intactId="EBI-9838721">
        <id>O64647</id>
    </interactant>
    <interactant intactId="EBI-2363192">
        <id>Q8S8E3</id>
        <label>PYL6</label>
    </interactant>
    <organismsDiffer>false</organismsDiffer>
    <experiments>3</experiments>
</comment>
<comment type="interaction">
    <interactant intactId="EBI-9838721">
        <id>O64647</id>
    </interactant>
    <interactant intactId="EBI-2349513">
        <id>Q84MC7</id>
        <label>PYL9</label>
    </interactant>
    <organismsDiffer>false</organismsDiffer>
    <experiments>3</experiments>
</comment>
<comment type="interaction">
    <interactant intactId="EBI-9838721">
        <id>O64647</id>
    </interactant>
    <interactant intactId="EBI-15192995">
        <id>O65517</id>
        <label>SRS2</label>
    </interactant>
    <organismsDiffer>false</organismsDiffer>
    <experiments>3</experiments>
</comment>
<comment type="interaction">
    <interactant intactId="EBI-9838721">
        <id>O64647</id>
    </interactant>
    <interactant intactId="EBI-4426144">
        <id>Q9C9L2</id>
        <label>TCP15</label>
    </interactant>
    <organismsDiffer>false</organismsDiffer>
    <experiments>3</experiments>
</comment>
<comment type="interaction">
    <interactant intactId="EBI-9838721">
        <id>O64647</id>
    </interactant>
    <interactant intactId="EBI-4426168">
        <id>Q9FTA2</id>
        <label>TCP21</label>
    </interactant>
    <organismsDiffer>false</organismsDiffer>
    <experiments>3</experiments>
</comment>
<comment type="interaction">
    <interactant intactId="EBI-9838721">
        <id>O64647</id>
    </interactant>
    <interactant intactId="EBI-15192677">
        <id>Q9FMX2</id>
        <label>TCP7</label>
    </interactant>
    <organismsDiffer>false</organismsDiffer>
    <experiments>4</experiments>
</comment>
<comment type="interaction">
    <interactant intactId="EBI-9838721">
        <id>O64647</id>
    </interactant>
    <interactant intactId="EBI-346271">
        <id>Q9SHZ6</id>
        <label>UBA1A</label>
    </interactant>
    <organismsDiffer>false</organismsDiffer>
    <experiments>3</experiments>
</comment>
<comment type="subcellular location">
    <subcellularLocation>
        <location evidence="4">Nucleus</location>
    </subcellularLocation>
</comment>
<comment type="tissue specificity">
    <text evidence="3">Expressed in archespores, pollen mother cell, ovule primordia and megaspore mother cells.</text>
</comment>
<protein>
    <recommendedName>
        <fullName>Transcription factor TCP9</fullName>
    </recommendedName>
</protein>
<proteinExistence type="evidence at protein level"/>